<organismHost>
    <name type="scientific">Olea</name>
    <dbReference type="NCBI Taxonomy" id="4145"/>
</organismHost>
<protein>
    <recommendedName>
        <fullName>Replication protein 1a</fullName>
    </recommendedName>
    <domain>
        <recommendedName>
            <fullName>ATP-dependent helicase</fullName>
            <ecNumber>3.6.4.-</ecNumber>
        </recommendedName>
    </domain>
    <domain>
        <recommendedName>
            <fullName>Methyltransferase</fullName>
            <ecNumber>2.1.1.-</ecNumber>
        </recommendedName>
    </domain>
</protein>
<evidence type="ECO:0000250" key="1"/>
<evidence type="ECO:0000255" key="2">
    <source>
        <dbReference type="PROSITE-ProRule" id="PRU01079"/>
    </source>
</evidence>
<evidence type="ECO:0000305" key="3"/>
<gene>
    <name type="ORF">ORF1a</name>
</gene>
<comment type="function">
    <text evidence="1">Involved in the virus replication. Contains a helicase domain and a methyltransferase domain. The methyltransferase domain is probably involved in viral RNA capping. Involved in the formation of ER membrane spherular invaginations in which RNA replication complexes form (By similarity).</text>
</comment>
<comment type="subunit">
    <text evidence="1">Interacts with RNA-directed RNA polymerase 2a.</text>
</comment>
<comment type="subcellular location">
    <subcellularLocation>
        <location evidence="1">Host endoplasmic reticulum membrane</location>
        <topology evidence="1">Peripheral membrane protein</topology>
    </subcellularLocation>
</comment>
<comment type="similarity">
    <text evidence="3">Belongs to the bromoviridae replication protein 1a family.</text>
</comment>
<reference key="1">
    <citation type="journal article" date="1996" name="J. Gen. Virol.">
        <title>The nucleotide sequence of RNA1 and RNA2 of olive latent virus 2 and its relationships in the family Bromoviridae.</title>
        <authorList>
            <person name="Grieco F."/>
            <person name="Dell'Orco M."/>
            <person name="Martelli G.P."/>
        </authorList>
    </citation>
    <scope>NUCLEOTIDE SEQUENCE [GENOMIC RNA]</scope>
</reference>
<reference key="2">
    <citation type="submission" date="1999-02" db="EMBL/GenBank/DDBJ databases">
        <authorList>
            <person name="Grieco F."/>
        </authorList>
    </citation>
    <scope>SEQUENCE REVISION</scope>
</reference>
<accession>Q83943</accession>
<sequence>MDSAALEKMTGAKFPAVQGVIEEFSRDRVQNVLGDMRSRQVIKYAVGLSEASVQELRFNWPCFTWEEESVPLPPHPFAAYSRRAFTRWAIAQCGPVPIKDFGGNWFLHWQWQTGVHSCCPLLNPRDGAHQTRRELNMESYLRTHGPKYDKFNELSRPDLCHHRAEDCSVRAKAALSVDSAYDMGLKNTCKAMHRAGIELLHGNILFDPDMLIEAKMEGFVAGMNYHWKKTRRSTGLMSSFLEMGSSLFGVSNSSKEGEGHHDLKIKMGSSSTHMVPADWEISYHFRDDCVLGYTHNLADVLSIATGSYVKVGNTFYELERTGLKSGMLMYTITACKGLYDRASARSTPLSAKASTVIINGMSYQVGEKLDPISFPYLAASFYMQAQKAVFEVQQVVDLHTPNRNLWSWFKKKFELKAHAFLFALGLRDSHDEWLLDQIEFELNETVCTLPGEFLEPVSEVERLDAALEDWRRDRERLNGKSVENLKTLTVLVELAKKLGISAYEVLNSHQNESERPKDQWHVEAALFEAVELERAHWKMLTAEAQAMSLQDPLSREAKSKGWSYESSDSLPCAYAYVFSEGRFVKPADLKKKTRVLVSPSMQIMNQIRMAESLEKAIAMNVKSCKKTWIDGVAGCGKTYEIVHTADIFKKDDLILTANKKSQEDIFSQLKPGTDCAKRIRTVDSYLLKPDVQAKRLFIDEAGLVHPGKLLAAMRFAECDDCLLFGDSEQIPFVNIVESLQPAKFLKLEVDAREVRETTYRCPADVTATLATLYKKKKIVTKSKVLKSVTSKSLASASAVSGLDPHSWHLTMYQADKAELVRVARTNQMDDVWIKEHIKTVHEAQGISVPHVKLYRFKTFDQPLFDAAHAEAYRLVAISRHTQSFTYIGVNQHLCKADRMLKFVICQIP</sequence>
<proteinExistence type="inferred from homology"/>
<feature type="chain" id="PRO_0000402414" description="Replication protein 1a">
    <location>
        <begin position="1"/>
        <end position="908"/>
    </location>
</feature>
<feature type="domain" description="Alphavirus-like MT" evidence="2">
    <location>
        <begin position="66"/>
        <end position="304"/>
    </location>
</feature>
<feature type="domain" description="(+)RNA virus helicase ATP-binding">
    <location>
        <begin position="599"/>
        <end position="755"/>
    </location>
</feature>
<feature type="domain" description="(+)RNA virus helicase C-terminal">
    <location>
        <begin position="756"/>
        <end position="908"/>
    </location>
</feature>
<feature type="region of interest" description="Methyltransferase">
    <location>
        <begin position="47"/>
        <end position="341"/>
    </location>
</feature>
<feature type="region of interest" description="ATP-dependent helicase">
    <location>
        <begin position="629"/>
        <end position="887"/>
    </location>
</feature>
<name>1A_OLV2I</name>
<keyword id="KW-0067">ATP-binding</keyword>
<keyword id="KW-0347">Helicase</keyword>
<keyword id="KW-1038">Host endoplasmic reticulum</keyword>
<keyword id="KW-1043">Host membrane</keyword>
<keyword id="KW-0378">Hydrolase</keyword>
<keyword id="KW-0472">Membrane</keyword>
<keyword id="KW-0489">Methyltransferase</keyword>
<keyword id="KW-0547">Nucleotide-binding</keyword>
<keyword id="KW-1185">Reference proteome</keyword>
<keyword id="KW-0808">Transferase</keyword>
<organism>
    <name type="scientific">Olive latent virus 2 (isolate Italy)</name>
    <name type="common">OLV-2</name>
    <dbReference type="NCBI Taxonomy" id="650489"/>
    <lineage>
        <taxon>Viruses</taxon>
        <taxon>Riboviria</taxon>
        <taxon>Orthornavirae</taxon>
        <taxon>Kitrinoviricota</taxon>
        <taxon>Alsuviricetes</taxon>
        <taxon>Martellivirales</taxon>
        <taxon>Bromoviridae</taxon>
        <taxon>Oleavirus</taxon>
        <taxon>Olive latent virus 2</taxon>
    </lineage>
</organism>
<dbReference type="EC" id="3.6.4.-"/>
<dbReference type="EC" id="2.1.1.-"/>
<dbReference type="EMBL" id="X94346">
    <property type="protein sequence ID" value="CAA64072.1"/>
    <property type="molecule type" value="Genomic_RNA"/>
</dbReference>
<dbReference type="RefSeq" id="NP_620042.1">
    <property type="nucleotide sequence ID" value="NC_003673.1"/>
</dbReference>
<dbReference type="SMR" id="Q83943"/>
<dbReference type="KEGG" id="vg:991141"/>
<dbReference type="Proteomes" id="UP000000412">
    <property type="component" value="Genome"/>
</dbReference>
<dbReference type="GO" id="GO:0044167">
    <property type="term" value="C:host cell endoplasmic reticulum membrane"/>
    <property type="evidence" value="ECO:0007669"/>
    <property type="project" value="UniProtKB-SubCell"/>
</dbReference>
<dbReference type="GO" id="GO:0016020">
    <property type="term" value="C:membrane"/>
    <property type="evidence" value="ECO:0007669"/>
    <property type="project" value="UniProtKB-KW"/>
</dbReference>
<dbReference type="GO" id="GO:0005524">
    <property type="term" value="F:ATP binding"/>
    <property type="evidence" value="ECO:0007669"/>
    <property type="project" value="UniProtKB-KW"/>
</dbReference>
<dbReference type="GO" id="GO:0004386">
    <property type="term" value="F:helicase activity"/>
    <property type="evidence" value="ECO:0007669"/>
    <property type="project" value="UniProtKB-KW"/>
</dbReference>
<dbReference type="GO" id="GO:0016787">
    <property type="term" value="F:hydrolase activity"/>
    <property type="evidence" value="ECO:0007669"/>
    <property type="project" value="UniProtKB-KW"/>
</dbReference>
<dbReference type="GO" id="GO:0008174">
    <property type="term" value="F:mRNA methyltransferase activity"/>
    <property type="evidence" value="ECO:0007669"/>
    <property type="project" value="InterPro"/>
</dbReference>
<dbReference type="GO" id="GO:0003723">
    <property type="term" value="F:RNA binding"/>
    <property type="evidence" value="ECO:0007669"/>
    <property type="project" value="InterPro"/>
</dbReference>
<dbReference type="GO" id="GO:0032259">
    <property type="term" value="P:methylation"/>
    <property type="evidence" value="ECO:0007669"/>
    <property type="project" value="UniProtKB-KW"/>
</dbReference>
<dbReference type="GO" id="GO:0016556">
    <property type="term" value="P:mRNA modification"/>
    <property type="evidence" value="ECO:0007669"/>
    <property type="project" value="InterPro"/>
</dbReference>
<dbReference type="GO" id="GO:0006396">
    <property type="term" value="P:RNA processing"/>
    <property type="evidence" value="ECO:0007669"/>
    <property type="project" value="InterPro"/>
</dbReference>
<dbReference type="Gene3D" id="3.40.50.300">
    <property type="entry name" value="P-loop containing nucleotide triphosphate hydrolases"/>
    <property type="match status" value="2"/>
</dbReference>
<dbReference type="InterPro" id="IPR027351">
    <property type="entry name" value="(+)RNA_virus_helicase_core_dom"/>
</dbReference>
<dbReference type="InterPro" id="IPR002588">
    <property type="entry name" value="Alphavirus-like_MT_dom"/>
</dbReference>
<dbReference type="InterPro" id="IPR027417">
    <property type="entry name" value="P-loop_NTPase"/>
</dbReference>
<dbReference type="Pfam" id="PF01443">
    <property type="entry name" value="Viral_helicase1"/>
    <property type="match status" value="1"/>
</dbReference>
<dbReference type="Pfam" id="PF01660">
    <property type="entry name" value="Vmethyltransf"/>
    <property type="match status" value="1"/>
</dbReference>
<dbReference type="SUPFAM" id="SSF52540">
    <property type="entry name" value="P-loop containing nucleoside triphosphate hydrolases"/>
    <property type="match status" value="1"/>
</dbReference>
<dbReference type="PROSITE" id="PS51743">
    <property type="entry name" value="ALPHAVIRUS_MT"/>
    <property type="match status" value="1"/>
</dbReference>
<dbReference type="PROSITE" id="PS51657">
    <property type="entry name" value="PSRV_HELICASE"/>
    <property type="match status" value="1"/>
</dbReference>